<evidence type="ECO:0000256" key="1">
    <source>
        <dbReference type="SAM" id="MobiDB-lite"/>
    </source>
</evidence>
<name>CSI2_YEAST</name>
<reference key="1">
    <citation type="journal article" date="1997" name="Nature">
        <title>The nucleotide sequence of Saccharomyces cerevisiae chromosome XV.</title>
        <authorList>
            <person name="Dujon B."/>
            <person name="Albermann K."/>
            <person name="Aldea M."/>
            <person name="Alexandraki D."/>
            <person name="Ansorge W."/>
            <person name="Arino J."/>
            <person name="Benes V."/>
            <person name="Bohn C."/>
            <person name="Bolotin-Fukuhara M."/>
            <person name="Bordonne R."/>
            <person name="Boyer J."/>
            <person name="Camasses A."/>
            <person name="Casamayor A."/>
            <person name="Casas C."/>
            <person name="Cheret G."/>
            <person name="Cziepluch C."/>
            <person name="Daignan-Fornier B."/>
            <person name="Dang V.-D."/>
            <person name="de Haan M."/>
            <person name="Delius H."/>
            <person name="Durand P."/>
            <person name="Fairhead C."/>
            <person name="Feldmann H."/>
            <person name="Gaillon L."/>
            <person name="Galisson F."/>
            <person name="Gamo F.-J."/>
            <person name="Gancedo C."/>
            <person name="Goffeau A."/>
            <person name="Goulding S.E."/>
            <person name="Grivell L.A."/>
            <person name="Habbig B."/>
            <person name="Hand N.J."/>
            <person name="Hani J."/>
            <person name="Hattenhorst U."/>
            <person name="Hebling U."/>
            <person name="Hernando Y."/>
            <person name="Herrero E."/>
            <person name="Heumann K."/>
            <person name="Hiesel R."/>
            <person name="Hilger F."/>
            <person name="Hofmann B."/>
            <person name="Hollenberg C.P."/>
            <person name="Hughes B."/>
            <person name="Jauniaux J.-C."/>
            <person name="Kalogeropoulos A."/>
            <person name="Katsoulou C."/>
            <person name="Kordes E."/>
            <person name="Lafuente M.J."/>
            <person name="Landt O."/>
            <person name="Louis E.J."/>
            <person name="Maarse A.C."/>
            <person name="Madania A."/>
            <person name="Mannhaupt G."/>
            <person name="Marck C."/>
            <person name="Martin R.P."/>
            <person name="Mewes H.-W."/>
            <person name="Michaux G."/>
            <person name="Paces V."/>
            <person name="Parle-McDermott A.G."/>
            <person name="Pearson B.M."/>
            <person name="Perrin A."/>
            <person name="Pettersson B."/>
            <person name="Poch O."/>
            <person name="Pohl T.M."/>
            <person name="Poirey R."/>
            <person name="Portetelle D."/>
            <person name="Pujol A."/>
            <person name="Purnelle B."/>
            <person name="Ramezani Rad M."/>
            <person name="Rechmann S."/>
            <person name="Schwager C."/>
            <person name="Schweizer M."/>
            <person name="Sor F."/>
            <person name="Sterky F."/>
            <person name="Tarassov I.A."/>
            <person name="Teodoru C."/>
            <person name="Tettelin H."/>
            <person name="Thierry A."/>
            <person name="Tobiasch E."/>
            <person name="Tzermia M."/>
            <person name="Uhlen M."/>
            <person name="Unseld M."/>
            <person name="Valens M."/>
            <person name="Vandenbol M."/>
            <person name="Vetter I."/>
            <person name="Vlcek C."/>
            <person name="Voet M."/>
            <person name="Volckaert G."/>
            <person name="Voss H."/>
            <person name="Wambutt R."/>
            <person name="Wedler H."/>
            <person name="Wiemann S."/>
            <person name="Winsor B."/>
            <person name="Wolfe K.H."/>
            <person name="Zollner A."/>
            <person name="Zumstein E."/>
            <person name="Kleine K."/>
        </authorList>
    </citation>
    <scope>NUCLEOTIDE SEQUENCE [LARGE SCALE GENOMIC DNA]</scope>
    <source>
        <strain>ATCC 204508 / S288c</strain>
    </source>
</reference>
<reference key="2">
    <citation type="journal article" date="2014" name="G3 (Bethesda)">
        <title>The reference genome sequence of Saccharomyces cerevisiae: Then and now.</title>
        <authorList>
            <person name="Engel S.R."/>
            <person name="Dietrich F.S."/>
            <person name="Fisk D.G."/>
            <person name="Binkley G."/>
            <person name="Balakrishnan R."/>
            <person name="Costanzo M.C."/>
            <person name="Dwight S.S."/>
            <person name="Hitz B.C."/>
            <person name="Karra K."/>
            <person name="Nash R.S."/>
            <person name="Weng S."/>
            <person name="Wong E.D."/>
            <person name="Lloyd P."/>
            <person name="Skrzypek M.S."/>
            <person name="Miyasato S.R."/>
            <person name="Simison M."/>
            <person name="Cherry J.M."/>
        </authorList>
    </citation>
    <scope>GENOME REANNOTATION</scope>
    <source>
        <strain>ATCC 204508 / S288c</strain>
    </source>
</reference>
<reference key="3">
    <citation type="unpublished observations" date="1998-02">
        <authorList>
            <person name="Demarini D.J."/>
            <person name="Pringle J.R."/>
        </authorList>
    </citation>
    <scope>CHARACTERIZATION</scope>
</reference>
<organism>
    <name type="scientific">Saccharomyces cerevisiae (strain ATCC 204508 / S288c)</name>
    <name type="common">Baker's yeast</name>
    <dbReference type="NCBI Taxonomy" id="559292"/>
    <lineage>
        <taxon>Eukaryota</taxon>
        <taxon>Fungi</taxon>
        <taxon>Dikarya</taxon>
        <taxon>Ascomycota</taxon>
        <taxon>Saccharomycotina</taxon>
        <taxon>Saccharomycetes</taxon>
        <taxon>Saccharomycetales</taxon>
        <taxon>Saccharomycetaceae</taxon>
        <taxon>Saccharomyces</taxon>
    </lineage>
</organism>
<sequence length="341" mass="37256">MRLPEISIWKVILLLHLFALQEFQLVSAANLPSLSSSTKAADSSSKGSSSAKTTTSLGKSSVTSKDVSSSHNVTSSTKMPKITTSASTSLYTNSSLWSNNSVISTSSITPSSVYIPVTDGNKFLYQAHHPNGTVFIAFAGCLGAILLSLTGAWIALNIKSWRSARKENKLRNLENQYQHDPFYFQTNINDDESETSSHSDDSDISEKVLKNNSSRMSLYTLGSTSVLNLLNNKTDANDNFRSSMFISPTEILQSDANNSNTWSQSNESAIYDSLSSTPREPGATQILGKFTDSTNPFNYTSYNLSPDSEDRSTPKSNVSQGKVKKYRPPSVHLDQLLDGKE</sequence>
<keyword id="KW-1185">Reference proteome</keyword>
<protein>
    <recommendedName>
        <fullName>Chitin synthase 3 complex protein CSI2</fullName>
    </recommendedName>
</protein>
<comment type="function">
    <text>Appears to be a structural component of the chitin synthase 3 complex.</text>
</comment>
<accession>Q08054</accession>
<accession>D6W260</accession>
<gene>
    <name type="primary">CSI2</name>
    <name type="ordered locus">YOL007C</name>
</gene>
<proteinExistence type="evidence at protein level"/>
<feature type="chain" id="PRO_0000079399" description="Chitin synthase 3 complex protein CSI2">
    <location>
        <begin position="1"/>
        <end position="341"/>
    </location>
</feature>
<feature type="region of interest" description="Disordered" evidence="1">
    <location>
        <begin position="35"/>
        <end position="78"/>
    </location>
</feature>
<feature type="region of interest" description="Disordered" evidence="1">
    <location>
        <begin position="272"/>
        <end position="291"/>
    </location>
</feature>
<feature type="region of interest" description="Disordered" evidence="1">
    <location>
        <begin position="298"/>
        <end position="341"/>
    </location>
</feature>
<feature type="compositionally biased region" description="Low complexity" evidence="1">
    <location>
        <begin position="35"/>
        <end position="70"/>
    </location>
</feature>
<dbReference type="EMBL" id="Z74749">
    <property type="protein sequence ID" value="CAA99006.1"/>
    <property type="molecule type" value="Genomic_DNA"/>
</dbReference>
<dbReference type="EMBL" id="BK006948">
    <property type="protein sequence ID" value="DAA10776.1"/>
    <property type="molecule type" value="Genomic_DNA"/>
</dbReference>
<dbReference type="PIR" id="S66689">
    <property type="entry name" value="S66689"/>
</dbReference>
<dbReference type="RefSeq" id="NP_014636.1">
    <property type="nucleotide sequence ID" value="NM_001183261.1"/>
</dbReference>
<dbReference type="SMR" id="Q08054"/>
<dbReference type="BioGRID" id="34397">
    <property type="interactions" value="60"/>
</dbReference>
<dbReference type="FunCoup" id="Q08054">
    <property type="interactions" value="61"/>
</dbReference>
<dbReference type="IntAct" id="Q08054">
    <property type="interactions" value="2"/>
</dbReference>
<dbReference type="STRING" id="4932.YOL007C"/>
<dbReference type="iPTMnet" id="Q08054"/>
<dbReference type="PaxDb" id="4932-YOL007C"/>
<dbReference type="PeptideAtlas" id="Q08054"/>
<dbReference type="EnsemblFungi" id="YOL007C_mRNA">
    <property type="protein sequence ID" value="YOL007C"/>
    <property type="gene ID" value="YOL007C"/>
</dbReference>
<dbReference type="GeneID" id="854155"/>
<dbReference type="KEGG" id="sce:YOL007C"/>
<dbReference type="AGR" id="SGD:S000005367"/>
<dbReference type="SGD" id="S000005367">
    <property type="gene designation" value="CSI2"/>
</dbReference>
<dbReference type="VEuPathDB" id="FungiDB:YOL007C"/>
<dbReference type="eggNOG" id="ENOG502RZE8">
    <property type="taxonomic scope" value="Eukaryota"/>
</dbReference>
<dbReference type="HOGENOM" id="CLU_066467_0_0_1"/>
<dbReference type="InParanoid" id="Q08054"/>
<dbReference type="OMA" id="QSARSEY"/>
<dbReference type="OrthoDB" id="4065319at2759"/>
<dbReference type="BioCyc" id="YEAST:G3O-33424-MONOMER"/>
<dbReference type="BioGRID-ORCS" id="854155">
    <property type="hits" value="1 hit in 10 CRISPR screens"/>
</dbReference>
<dbReference type="PRO" id="PR:Q08054"/>
<dbReference type="Proteomes" id="UP000002311">
    <property type="component" value="Chromosome XV"/>
</dbReference>
<dbReference type="RNAct" id="Q08054">
    <property type="molecule type" value="protein"/>
</dbReference>
<dbReference type="GO" id="GO:0005935">
    <property type="term" value="C:cellular bud neck"/>
    <property type="evidence" value="ECO:0000314"/>
    <property type="project" value="SGD"/>
</dbReference>
<dbReference type="GO" id="GO:0000324">
    <property type="term" value="C:fungal-type vacuole"/>
    <property type="evidence" value="ECO:0000314"/>
    <property type="project" value="SGD"/>
</dbReference>
<dbReference type="InterPro" id="IPR051009">
    <property type="entry name" value="PRM"/>
</dbReference>
<dbReference type="PANTHER" id="PTHR36089">
    <property type="entry name" value="CHITIN SYNTHASE 3 COMPLEX PROTEIN CSI2-RELATED"/>
    <property type="match status" value="1"/>
</dbReference>
<dbReference type="PANTHER" id="PTHR36089:SF1">
    <property type="entry name" value="CHITIN SYNTHASE 3 COMPLEX PROTEIN CSI2-RELATED"/>
    <property type="match status" value="1"/>
</dbReference>